<evidence type="ECO:0000255" key="1">
    <source>
        <dbReference type="HAMAP-Rule" id="MF_00054"/>
    </source>
</evidence>
<organism>
    <name type="scientific">Legionella pneumophila (strain Lens)</name>
    <dbReference type="NCBI Taxonomy" id="297245"/>
    <lineage>
        <taxon>Bacteria</taxon>
        <taxon>Pseudomonadati</taxon>
        <taxon>Pseudomonadota</taxon>
        <taxon>Gammaproteobacteria</taxon>
        <taxon>Legionellales</taxon>
        <taxon>Legionellaceae</taxon>
        <taxon>Legionella</taxon>
    </lineage>
</organism>
<name>EFG_LEGPL</name>
<keyword id="KW-0963">Cytoplasm</keyword>
<keyword id="KW-0251">Elongation factor</keyword>
<keyword id="KW-0342">GTP-binding</keyword>
<keyword id="KW-0547">Nucleotide-binding</keyword>
<keyword id="KW-0648">Protein biosynthesis</keyword>
<sequence>MATPLKLYRNIGIAAHVDAGKTTTTERVLYYTGMSHKIGEVHDGAATMDWMVQEQERGITITSAATTCYWSGMDKQFESHRINIIDTPGHVDFMIEVERSLRVLDGAVVVFDSVAGVEPQSETVWRQANKYGVPRIVFVNKMDRMGANFLRVVSQIKQRLGSTPVVLQLPIGAEEEFKGVIDLIKMKAIQWDEENKGMTFKYVDIPADLKATCEEYRAHIIEAAAEYSEELMEKYLEGEEFTEAEIKKALRHLTITNKVVPVFCGSAFKNKGVQAVLDGVIEYLPSPTDIPDIQGVDEHGDEIHRKTSYDEPFSALAFKIATDPFVGTLTYFRAYSGILKSGDTVYNSVKGKKERIGRLLQMHANSREEIKEVRAGDIAAAVGLKTVTTGDTLCDQDKVVILERMDFPDPVIAVAVEPKTKADQEKMGIALGKLAQEDPSFRVHTDEESGQTIIQGMGELHLEIIVDRMKREFNVEANVGKPQVAYRETLKQAIEQEGKFVRQSGGRGQYGHVWLKIEPQEPGKGYEFINAIVGGVIPKEYIPAVDKGIQEQMQNGVIAGYPVVDVKVTLFDGSFHEVDSSEMAFKIAGSQCFKQGALKAKPVLLEPIMSVEVVTPEDYMGDVMGDLNRRRGLVQGMEDSPAGKIVRAEVPLAEMFGYSTDLRSATQGRATYTMEFCKYAEAPTNIAEAIIKKQ</sequence>
<feature type="chain" id="PRO_0000091142" description="Elongation factor G">
    <location>
        <begin position="1"/>
        <end position="694"/>
    </location>
</feature>
<feature type="domain" description="tr-type G">
    <location>
        <begin position="6"/>
        <end position="288"/>
    </location>
</feature>
<feature type="binding site" evidence="1">
    <location>
        <begin position="15"/>
        <end position="22"/>
    </location>
    <ligand>
        <name>GTP</name>
        <dbReference type="ChEBI" id="CHEBI:37565"/>
    </ligand>
</feature>
<feature type="binding site" evidence="1">
    <location>
        <begin position="86"/>
        <end position="90"/>
    </location>
    <ligand>
        <name>GTP</name>
        <dbReference type="ChEBI" id="CHEBI:37565"/>
    </ligand>
</feature>
<feature type="binding site" evidence="1">
    <location>
        <begin position="140"/>
        <end position="143"/>
    </location>
    <ligand>
        <name>GTP</name>
        <dbReference type="ChEBI" id="CHEBI:37565"/>
    </ligand>
</feature>
<reference key="1">
    <citation type="journal article" date="2004" name="Nat. Genet.">
        <title>Evidence in the Legionella pneumophila genome for exploitation of host cell functions and high genome plasticity.</title>
        <authorList>
            <person name="Cazalet C."/>
            <person name="Rusniok C."/>
            <person name="Brueggemann H."/>
            <person name="Zidane N."/>
            <person name="Magnier A."/>
            <person name="Ma L."/>
            <person name="Tichit M."/>
            <person name="Jarraud S."/>
            <person name="Bouchier C."/>
            <person name="Vandenesch F."/>
            <person name="Kunst F."/>
            <person name="Etienne J."/>
            <person name="Glaser P."/>
            <person name="Buchrieser C."/>
        </authorList>
    </citation>
    <scope>NUCLEOTIDE SEQUENCE [LARGE SCALE GENOMIC DNA]</scope>
    <source>
        <strain>Lens</strain>
    </source>
</reference>
<comment type="function">
    <text evidence="1">Catalyzes the GTP-dependent ribosomal translocation step during translation elongation. During this step, the ribosome changes from the pre-translocational (PRE) to the post-translocational (POST) state as the newly formed A-site-bound peptidyl-tRNA and P-site-bound deacylated tRNA move to the P and E sites, respectively. Catalyzes the coordinated movement of the two tRNA molecules, the mRNA and conformational changes in the ribosome.</text>
</comment>
<comment type="subcellular location">
    <subcellularLocation>
        <location evidence="1">Cytoplasm</location>
    </subcellularLocation>
</comment>
<comment type="similarity">
    <text evidence="1">Belongs to the TRAFAC class translation factor GTPase superfamily. Classic translation factor GTPase family. EF-G/EF-2 subfamily.</text>
</comment>
<gene>
    <name evidence="1" type="primary">fusA</name>
    <name type="ordered locus">lpl0366</name>
</gene>
<dbReference type="EMBL" id="CR628337">
    <property type="protein sequence ID" value="CAH14597.1"/>
    <property type="molecule type" value="Genomic_DNA"/>
</dbReference>
<dbReference type="RefSeq" id="WP_011214623.1">
    <property type="nucleotide sequence ID" value="NC_006369.1"/>
</dbReference>
<dbReference type="SMR" id="Q5WZL5"/>
<dbReference type="KEGG" id="lpf:lpl0366"/>
<dbReference type="LegioList" id="lpl0366"/>
<dbReference type="HOGENOM" id="CLU_002794_4_1_6"/>
<dbReference type="Proteomes" id="UP000002517">
    <property type="component" value="Chromosome"/>
</dbReference>
<dbReference type="GO" id="GO:0005737">
    <property type="term" value="C:cytoplasm"/>
    <property type="evidence" value="ECO:0007669"/>
    <property type="project" value="UniProtKB-SubCell"/>
</dbReference>
<dbReference type="GO" id="GO:0005525">
    <property type="term" value="F:GTP binding"/>
    <property type="evidence" value="ECO:0007669"/>
    <property type="project" value="UniProtKB-UniRule"/>
</dbReference>
<dbReference type="GO" id="GO:0003924">
    <property type="term" value="F:GTPase activity"/>
    <property type="evidence" value="ECO:0007669"/>
    <property type="project" value="InterPro"/>
</dbReference>
<dbReference type="GO" id="GO:0097216">
    <property type="term" value="F:guanosine tetraphosphate binding"/>
    <property type="evidence" value="ECO:0007669"/>
    <property type="project" value="UniProtKB-ARBA"/>
</dbReference>
<dbReference type="GO" id="GO:0003746">
    <property type="term" value="F:translation elongation factor activity"/>
    <property type="evidence" value="ECO:0007669"/>
    <property type="project" value="UniProtKB-UniRule"/>
</dbReference>
<dbReference type="GO" id="GO:0032790">
    <property type="term" value="P:ribosome disassembly"/>
    <property type="evidence" value="ECO:0007669"/>
    <property type="project" value="TreeGrafter"/>
</dbReference>
<dbReference type="CDD" id="cd01886">
    <property type="entry name" value="EF-G"/>
    <property type="match status" value="1"/>
</dbReference>
<dbReference type="CDD" id="cd16262">
    <property type="entry name" value="EFG_III"/>
    <property type="match status" value="1"/>
</dbReference>
<dbReference type="CDD" id="cd01434">
    <property type="entry name" value="EFG_mtEFG1_IV"/>
    <property type="match status" value="1"/>
</dbReference>
<dbReference type="CDD" id="cd03713">
    <property type="entry name" value="EFG_mtEFG_C"/>
    <property type="match status" value="1"/>
</dbReference>
<dbReference type="CDD" id="cd04088">
    <property type="entry name" value="EFG_mtEFG_II"/>
    <property type="match status" value="1"/>
</dbReference>
<dbReference type="FunFam" id="2.40.30.10:FF:000006">
    <property type="entry name" value="Elongation factor G"/>
    <property type="match status" value="1"/>
</dbReference>
<dbReference type="FunFam" id="3.30.230.10:FF:000003">
    <property type="entry name" value="Elongation factor G"/>
    <property type="match status" value="1"/>
</dbReference>
<dbReference type="FunFam" id="3.30.70.240:FF:000001">
    <property type="entry name" value="Elongation factor G"/>
    <property type="match status" value="1"/>
</dbReference>
<dbReference type="FunFam" id="3.30.70.870:FF:000001">
    <property type="entry name" value="Elongation factor G"/>
    <property type="match status" value="1"/>
</dbReference>
<dbReference type="FunFam" id="3.40.50.300:FF:000029">
    <property type="entry name" value="Elongation factor G"/>
    <property type="match status" value="1"/>
</dbReference>
<dbReference type="Gene3D" id="3.30.230.10">
    <property type="match status" value="1"/>
</dbReference>
<dbReference type="Gene3D" id="3.30.70.240">
    <property type="match status" value="1"/>
</dbReference>
<dbReference type="Gene3D" id="3.30.70.870">
    <property type="entry name" value="Elongation Factor G (Translational Gtpase), domain 3"/>
    <property type="match status" value="1"/>
</dbReference>
<dbReference type="Gene3D" id="3.40.50.300">
    <property type="entry name" value="P-loop containing nucleotide triphosphate hydrolases"/>
    <property type="match status" value="1"/>
</dbReference>
<dbReference type="Gene3D" id="2.40.30.10">
    <property type="entry name" value="Translation factors"/>
    <property type="match status" value="1"/>
</dbReference>
<dbReference type="HAMAP" id="MF_00054_B">
    <property type="entry name" value="EF_G_EF_2_B"/>
    <property type="match status" value="1"/>
</dbReference>
<dbReference type="InterPro" id="IPR041095">
    <property type="entry name" value="EFG_II"/>
</dbReference>
<dbReference type="InterPro" id="IPR009022">
    <property type="entry name" value="EFG_III"/>
</dbReference>
<dbReference type="InterPro" id="IPR035647">
    <property type="entry name" value="EFG_III/V"/>
</dbReference>
<dbReference type="InterPro" id="IPR047872">
    <property type="entry name" value="EFG_IV"/>
</dbReference>
<dbReference type="InterPro" id="IPR035649">
    <property type="entry name" value="EFG_V"/>
</dbReference>
<dbReference type="InterPro" id="IPR000640">
    <property type="entry name" value="EFG_V-like"/>
</dbReference>
<dbReference type="InterPro" id="IPR004161">
    <property type="entry name" value="EFTu-like_2"/>
</dbReference>
<dbReference type="InterPro" id="IPR031157">
    <property type="entry name" value="G_TR_CS"/>
</dbReference>
<dbReference type="InterPro" id="IPR027417">
    <property type="entry name" value="P-loop_NTPase"/>
</dbReference>
<dbReference type="InterPro" id="IPR020568">
    <property type="entry name" value="Ribosomal_Su5_D2-typ_SF"/>
</dbReference>
<dbReference type="InterPro" id="IPR014721">
    <property type="entry name" value="Ribsml_uS5_D2-typ_fold_subgr"/>
</dbReference>
<dbReference type="InterPro" id="IPR005225">
    <property type="entry name" value="Small_GTP-bd"/>
</dbReference>
<dbReference type="InterPro" id="IPR000795">
    <property type="entry name" value="T_Tr_GTP-bd_dom"/>
</dbReference>
<dbReference type="InterPro" id="IPR009000">
    <property type="entry name" value="Transl_B-barrel_sf"/>
</dbReference>
<dbReference type="InterPro" id="IPR004540">
    <property type="entry name" value="Transl_elong_EFG/EF2"/>
</dbReference>
<dbReference type="InterPro" id="IPR005517">
    <property type="entry name" value="Transl_elong_EFG/EF2_IV"/>
</dbReference>
<dbReference type="NCBIfam" id="TIGR00484">
    <property type="entry name" value="EF-G"/>
    <property type="match status" value="1"/>
</dbReference>
<dbReference type="NCBIfam" id="NF009379">
    <property type="entry name" value="PRK12740.1-3"/>
    <property type="match status" value="1"/>
</dbReference>
<dbReference type="NCBIfam" id="NF009381">
    <property type="entry name" value="PRK12740.1-5"/>
    <property type="match status" value="1"/>
</dbReference>
<dbReference type="NCBIfam" id="TIGR00231">
    <property type="entry name" value="small_GTP"/>
    <property type="match status" value="1"/>
</dbReference>
<dbReference type="PANTHER" id="PTHR43261:SF1">
    <property type="entry name" value="RIBOSOME-RELEASING FACTOR 2, MITOCHONDRIAL"/>
    <property type="match status" value="1"/>
</dbReference>
<dbReference type="PANTHER" id="PTHR43261">
    <property type="entry name" value="TRANSLATION ELONGATION FACTOR G-RELATED"/>
    <property type="match status" value="1"/>
</dbReference>
<dbReference type="Pfam" id="PF00679">
    <property type="entry name" value="EFG_C"/>
    <property type="match status" value="1"/>
</dbReference>
<dbReference type="Pfam" id="PF14492">
    <property type="entry name" value="EFG_III"/>
    <property type="match status" value="1"/>
</dbReference>
<dbReference type="Pfam" id="PF03764">
    <property type="entry name" value="EFG_IV"/>
    <property type="match status" value="1"/>
</dbReference>
<dbReference type="Pfam" id="PF00009">
    <property type="entry name" value="GTP_EFTU"/>
    <property type="match status" value="1"/>
</dbReference>
<dbReference type="Pfam" id="PF03144">
    <property type="entry name" value="GTP_EFTU_D2"/>
    <property type="match status" value="1"/>
</dbReference>
<dbReference type="PRINTS" id="PR00315">
    <property type="entry name" value="ELONGATNFCT"/>
</dbReference>
<dbReference type="SMART" id="SM00838">
    <property type="entry name" value="EFG_C"/>
    <property type="match status" value="1"/>
</dbReference>
<dbReference type="SMART" id="SM00889">
    <property type="entry name" value="EFG_IV"/>
    <property type="match status" value="1"/>
</dbReference>
<dbReference type="SUPFAM" id="SSF54980">
    <property type="entry name" value="EF-G C-terminal domain-like"/>
    <property type="match status" value="2"/>
</dbReference>
<dbReference type="SUPFAM" id="SSF52540">
    <property type="entry name" value="P-loop containing nucleoside triphosphate hydrolases"/>
    <property type="match status" value="1"/>
</dbReference>
<dbReference type="SUPFAM" id="SSF54211">
    <property type="entry name" value="Ribosomal protein S5 domain 2-like"/>
    <property type="match status" value="1"/>
</dbReference>
<dbReference type="SUPFAM" id="SSF50447">
    <property type="entry name" value="Translation proteins"/>
    <property type="match status" value="1"/>
</dbReference>
<dbReference type="PROSITE" id="PS00301">
    <property type="entry name" value="G_TR_1"/>
    <property type="match status" value="1"/>
</dbReference>
<dbReference type="PROSITE" id="PS51722">
    <property type="entry name" value="G_TR_2"/>
    <property type="match status" value="1"/>
</dbReference>
<protein>
    <recommendedName>
        <fullName evidence="1">Elongation factor G</fullName>
        <shortName evidence="1">EF-G</shortName>
    </recommendedName>
</protein>
<accession>Q5WZL5</accession>
<proteinExistence type="inferred from homology"/>